<gene>
    <name evidence="1" type="primary">rpsI</name>
    <name type="ordered locus">Sbal_3651</name>
</gene>
<reference key="1">
    <citation type="submission" date="2007-02" db="EMBL/GenBank/DDBJ databases">
        <title>Complete sequence of chromosome of Shewanella baltica OS155.</title>
        <authorList>
            <consortium name="US DOE Joint Genome Institute"/>
            <person name="Copeland A."/>
            <person name="Lucas S."/>
            <person name="Lapidus A."/>
            <person name="Barry K."/>
            <person name="Detter J.C."/>
            <person name="Glavina del Rio T."/>
            <person name="Hammon N."/>
            <person name="Israni S."/>
            <person name="Dalin E."/>
            <person name="Tice H."/>
            <person name="Pitluck S."/>
            <person name="Sims D.R."/>
            <person name="Brettin T."/>
            <person name="Bruce D."/>
            <person name="Han C."/>
            <person name="Tapia R."/>
            <person name="Brainard J."/>
            <person name="Schmutz J."/>
            <person name="Larimer F."/>
            <person name="Land M."/>
            <person name="Hauser L."/>
            <person name="Kyrpides N."/>
            <person name="Mikhailova N."/>
            <person name="Brettar I."/>
            <person name="Klappenbach J."/>
            <person name="Konstantinidis K."/>
            <person name="Rodrigues J."/>
            <person name="Tiedje J."/>
            <person name="Richardson P."/>
        </authorList>
    </citation>
    <scope>NUCLEOTIDE SEQUENCE [LARGE SCALE GENOMIC DNA]</scope>
    <source>
        <strain>OS155 / ATCC BAA-1091</strain>
    </source>
</reference>
<sequence>MAATQYYGTGRRKTSTARVFAKAGSGNIVVNQRPLDQYFGRETARMVVRQPLELVEMTDKLDIYVTVKGGGITGQAGAIRHGITRALMQLDEALRPSLRSAGFVTRDARKVERKKVGLRKARRKPQFSKR</sequence>
<evidence type="ECO:0000255" key="1">
    <source>
        <dbReference type="HAMAP-Rule" id="MF_00532"/>
    </source>
</evidence>
<evidence type="ECO:0000305" key="2"/>
<organism>
    <name type="scientific">Shewanella baltica (strain OS155 / ATCC BAA-1091)</name>
    <dbReference type="NCBI Taxonomy" id="325240"/>
    <lineage>
        <taxon>Bacteria</taxon>
        <taxon>Pseudomonadati</taxon>
        <taxon>Pseudomonadota</taxon>
        <taxon>Gammaproteobacteria</taxon>
        <taxon>Alteromonadales</taxon>
        <taxon>Shewanellaceae</taxon>
        <taxon>Shewanella</taxon>
    </lineage>
</organism>
<accession>A3D8R3</accession>
<comment type="similarity">
    <text evidence="1">Belongs to the universal ribosomal protein uS9 family.</text>
</comment>
<dbReference type="EMBL" id="CP000563">
    <property type="protein sequence ID" value="ABN63126.1"/>
    <property type="molecule type" value="Genomic_DNA"/>
</dbReference>
<dbReference type="RefSeq" id="WP_006083052.1">
    <property type="nucleotide sequence ID" value="NC_009052.1"/>
</dbReference>
<dbReference type="SMR" id="A3D8R3"/>
<dbReference type="STRING" id="325240.Sbal_3651"/>
<dbReference type="GeneID" id="94726683"/>
<dbReference type="KEGG" id="sbl:Sbal_3651"/>
<dbReference type="HOGENOM" id="CLU_046483_2_1_6"/>
<dbReference type="OrthoDB" id="9803965at2"/>
<dbReference type="Proteomes" id="UP000001557">
    <property type="component" value="Chromosome"/>
</dbReference>
<dbReference type="GO" id="GO:0022627">
    <property type="term" value="C:cytosolic small ribosomal subunit"/>
    <property type="evidence" value="ECO:0007669"/>
    <property type="project" value="TreeGrafter"/>
</dbReference>
<dbReference type="GO" id="GO:0003723">
    <property type="term" value="F:RNA binding"/>
    <property type="evidence" value="ECO:0007669"/>
    <property type="project" value="TreeGrafter"/>
</dbReference>
<dbReference type="GO" id="GO:0003735">
    <property type="term" value="F:structural constituent of ribosome"/>
    <property type="evidence" value="ECO:0007669"/>
    <property type="project" value="InterPro"/>
</dbReference>
<dbReference type="GO" id="GO:0006412">
    <property type="term" value="P:translation"/>
    <property type="evidence" value="ECO:0007669"/>
    <property type="project" value="UniProtKB-UniRule"/>
</dbReference>
<dbReference type="FunFam" id="3.30.230.10:FF:000001">
    <property type="entry name" value="30S ribosomal protein S9"/>
    <property type="match status" value="1"/>
</dbReference>
<dbReference type="Gene3D" id="3.30.230.10">
    <property type="match status" value="1"/>
</dbReference>
<dbReference type="HAMAP" id="MF_00532_B">
    <property type="entry name" value="Ribosomal_uS9_B"/>
    <property type="match status" value="1"/>
</dbReference>
<dbReference type="InterPro" id="IPR020568">
    <property type="entry name" value="Ribosomal_Su5_D2-typ_SF"/>
</dbReference>
<dbReference type="InterPro" id="IPR000754">
    <property type="entry name" value="Ribosomal_uS9"/>
</dbReference>
<dbReference type="InterPro" id="IPR023035">
    <property type="entry name" value="Ribosomal_uS9_bac/plastid"/>
</dbReference>
<dbReference type="InterPro" id="IPR020574">
    <property type="entry name" value="Ribosomal_uS9_CS"/>
</dbReference>
<dbReference type="InterPro" id="IPR014721">
    <property type="entry name" value="Ribsml_uS5_D2-typ_fold_subgr"/>
</dbReference>
<dbReference type="NCBIfam" id="NF001099">
    <property type="entry name" value="PRK00132.1"/>
    <property type="match status" value="1"/>
</dbReference>
<dbReference type="PANTHER" id="PTHR21569">
    <property type="entry name" value="RIBOSOMAL PROTEIN S9"/>
    <property type="match status" value="1"/>
</dbReference>
<dbReference type="PANTHER" id="PTHR21569:SF1">
    <property type="entry name" value="SMALL RIBOSOMAL SUBUNIT PROTEIN US9M"/>
    <property type="match status" value="1"/>
</dbReference>
<dbReference type="Pfam" id="PF00380">
    <property type="entry name" value="Ribosomal_S9"/>
    <property type="match status" value="1"/>
</dbReference>
<dbReference type="SUPFAM" id="SSF54211">
    <property type="entry name" value="Ribosomal protein S5 domain 2-like"/>
    <property type="match status" value="1"/>
</dbReference>
<dbReference type="PROSITE" id="PS00360">
    <property type="entry name" value="RIBOSOMAL_S9"/>
    <property type="match status" value="1"/>
</dbReference>
<feature type="chain" id="PRO_1000051318" description="Small ribosomal subunit protein uS9">
    <location>
        <begin position="1"/>
        <end position="130"/>
    </location>
</feature>
<keyword id="KW-1185">Reference proteome</keyword>
<keyword id="KW-0687">Ribonucleoprotein</keyword>
<keyword id="KW-0689">Ribosomal protein</keyword>
<protein>
    <recommendedName>
        <fullName evidence="1">Small ribosomal subunit protein uS9</fullName>
    </recommendedName>
    <alternativeName>
        <fullName evidence="2">30S ribosomal protein S9</fullName>
    </alternativeName>
</protein>
<proteinExistence type="inferred from homology"/>
<name>RS9_SHEB5</name>